<accession>P22637</accession>
<dbReference type="EC" id="1.1.3.6" evidence="11"/>
<dbReference type="EC" id="5.3.3.1" evidence="11"/>
<dbReference type="EMBL" id="D00712">
    <property type="protein sequence ID" value="BAA00617.1"/>
    <property type="molecule type" value="Genomic_DNA"/>
</dbReference>
<dbReference type="PIR" id="JQ1193">
    <property type="entry name" value="JQ1193"/>
</dbReference>
<dbReference type="PDB" id="1COY">
    <property type="method" value="X-ray"/>
    <property type="resolution" value="1.80 A"/>
    <property type="chains" value="A=46-552"/>
</dbReference>
<dbReference type="PDB" id="3COX">
    <property type="method" value="X-ray"/>
    <property type="resolution" value="1.80 A"/>
    <property type="chains" value="A=46-552"/>
</dbReference>
<dbReference type="PDBsum" id="1COY"/>
<dbReference type="PDBsum" id="3COX"/>
<dbReference type="SMR" id="P22637"/>
<dbReference type="DrugBank" id="DB03147">
    <property type="generic name" value="Flavin adenine dinucleotide"/>
</dbReference>
<dbReference type="DrugBank" id="DB01708">
    <property type="generic name" value="Prasterone"/>
</dbReference>
<dbReference type="BioCyc" id="MetaCyc:MONOMER-16891"/>
<dbReference type="BRENDA" id="1.1.3.6">
    <property type="organism ID" value="978"/>
</dbReference>
<dbReference type="UniPathway" id="UPA01058"/>
<dbReference type="EvolutionaryTrace" id="P22637"/>
<dbReference type="GO" id="GO:0005576">
    <property type="term" value="C:extracellular region"/>
    <property type="evidence" value="ECO:0007669"/>
    <property type="project" value="UniProtKB-SubCell"/>
</dbReference>
<dbReference type="GO" id="GO:0016995">
    <property type="term" value="F:cholesterol oxidase activity"/>
    <property type="evidence" value="ECO:0007669"/>
    <property type="project" value="UniProtKB-EC"/>
</dbReference>
<dbReference type="GO" id="GO:0050660">
    <property type="term" value="F:flavin adenine dinucleotide binding"/>
    <property type="evidence" value="ECO:0007669"/>
    <property type="project" value="InterPro"/>
</dbReference>
<dbReference type="GO" id="GO:0004769">
    <property type="term" value="F:steroid Delta-isomerase activity"/>
    <property type="evidence" value="ECO:0007669"/>
    <property type="project" value="UniProtKB-EC"/>
</dbReference>
<dbReference type="GO" id="GO:0006707">
    <property type="term" value="P:cholesterol catabolic process"/>
    <property type="evidence" value="ECO:0007669"/>
    <property type="project" value="UniProtKB-UniPathway"/>
</dbReference>
<dbReference type="Gene3D" id="3.30.410.10">
    <property type="entry name" value="Cholesterol Oxidase, domain 2"/>
    <property type="match status" value="1"/>
</dbReference>
<dbReference type="Gene3D" id="3.50.50.60">
    <property type="entry name" value="FAD/NAD(P)-binding domain"/>
    <property type="match status" value="1"/>
</dbReference>
<dbReference type="InterPro" id="IPR052542">
    <property type="entry name" value="Cholesterol_Oxidase"/>
</dbReference>
<dbReference type="InterPro" id="IPR036188">
    <property type="entry name" value="FAD/NAD-bd_sf"/>
</dbReference>
<dbReference type="InterPro" id="IPR000172">
    <property type="entry name" value="GMC_OxRdtase_N"/>
</dbReference>
<dbReference type="InterPro" id="IPR007867">
    <property type="entry name" value="GMC_OxRtase_C"/>
</dbReference>
<dbReference type="InterPro" id="IPR006311">
    <property type="entry name" value="TAT_signal"/>
</dbReference>
<dbReference type="PANTHER" id="PTHR47470">
    <property type="entry name" value="CHOLESTEROL OXIDASE"/>
    <property type="match status" value="1"/>
</dbReference>
<dbReference type="PANTHER" id="PTHR47470:SF1">
    <property type="entry name" value="FAD-DEPENDENT OXIDOREDUCTASE 2 FAD BINDING DOMAIN-CONTAINING PROTEIN"/>
    <property type="match status" value="1"/>
</dbReference>
<dbReference type="Pfam" id="PF05199">
    <property type="entry name" value="GMC_oxred_C"/>
    <property type="match status" value="1"/>
</dbReference>
<dbReference type="Pfam" id="PF22500">
    <property type="entry name" value="GMC_oxred_C_1st"/>
    <property type="match status" value="1"/>
</dbReference>
<dbReference type="Pfam" id="PF00732">
    <property type="entry name" value="GMC_oxred_N"/>
    <property type="match status" value="1"/>
</dbReference>
<dbReference type="SUPFAM" id="SSF54373">
    <property type="entry name" value="FAD-linked reductases, C-terminal domain"/>
    <property type="match status" value="1"/>
</dbReference>
<dbReference type="SUPFAM" id="SSF51905">
    <property type="entry name" value="FAD/NAD(P)-binding domain"/>
    <property type="match status" value="1"/>
</dbReference>
<dbReference type="PROSITE" id="PS00623">
    <property type="entry name" value="GMC_OXRED_1"/>
    <property type="match status" value="1"/>
</dbReference>
<dbReference type="PROSITE" id="PS51318">
    <property type="entry name" value="TAT"/>
    <property type="match status" value="1"/>
</dbReference>
<proteinExistence type="evidence at protein level"/>
<reference key="1">
    <citation type="journal article" date="1991" name="Gene">
        <title>Sequence of gene choB encoding cholesterol oxidase of Brevibacterium sterolicum: comparison with choA of streptomyces sp. SA-COO.</title>
        <authorList>
            <person name="Ohta T."/>
            <person name="Fujishiro K."/>
            <person name="Yamaguchi K."/>
            <person name="Tamura Y."/>
            <person name="Aisaka K."/>
            <person name="Uwajima T."/>
            <person name="Hasegawa M."/>
        </authorList>
    </citation>
    <scope>NUCLEOTIDE SEQUENCE [GENOMIC DNA]</scope>
    <scope>PROTEIN SEQUENCE OF 46-55</scope>
    <scope>SUBCELLULAR LOCATION</scope>
    <source>
        <strain>ATCC 21387 / NCIB 11161</strain>
    </source>
</reference>
<reference key="2">
    <citation type="journal article" date="1990" name="Biochem. Biophys. Res. Commun.">
        <title>Isolation and identification of the gene of cholesterol oxidase from Brevibacterium sterolicum ATCC 21387, a widely used enzyme in clinical analysis.</title>
        <authorList>
            <person name="Fujishiro K."/>
            <person name="Ota T."/>
            <person name="Hasegawa M."/>
            <person name="Yamaguchi K."/>
            <person name="Mizukami T."/>
            <person name="Uwajima T."/>
        </authorList>
    </citation>
    <scope>PRELIMINARY NUCLEOTIDE SEQUENCE [GENOMIC DNA] OF 46-552</scope>
    <scope>PARTIAL PROTEIN SEQUENCE</scope>
    <source>
        <strain>ATCC 21387 / NCIB 11161</strain>
    </source>
</reference>
<reference key="3">
    <citation type="journal article" date="1990" name="Biochem. Biophys. Res. Commun.">
        <authorList>
            <person name="Fujishiro K."/>
            <person name="Ota T."/>
            <person name="Hasegawa M."/>
            <person name="Yamaguchi K."/>
            <person name="Mizukami T."/>
            <person name="Uwajima T."/>
        </authorList>
    </citation>
    <scope>ERRATUM OF PUBMED:2271066</scope>
</reference>
<reference key="4">
    <citation type="journal article" date="1998" name="Protein Expr. Purif.">
        <title>Increased expression of Brevibacterium sterolicum cholesterol oxidase in Escherichia coli by genetic modification.</title>
        <authorList>
            <person name="Sampson N.S."/>
            <person name="Chen X."/>
        </authorList>
    </citation>
    <scope>FUNCTION</scope>
    <scope>CATALYTIC ACTIVITY</scope>
</reference>
<reference key="5">
    <citation type="journal article" date="1991" name="J. Mol. Biol.">
        <title>Crystal structure of cholesterol oxidase from Brevibacterium sterolicum refined at 1.8-A resolution.</title>
        <authorList>
            <person name="Vrielink A."/>
            <person name="Lloyld L.F."/>
            <person name="Blow D.M."/>
        </authorList>
    </citation>
    <scope>X-RAY CRYSTALLOGRAPHY (1.8 ANGSTROMS)</scope>
    <scope>COFACTOR</scope>
    <scope>DOMAIN</scope>
</reference>
<reference evidence="12 13" key="6">
    <citation type="journal article" date="1993" name="Biochemistry">
        <title>Crystal structure of cholesterol oxidase complexed with a steroid substrate: implications for flavin adenine dinucleotide dependent alcohol oxidases.</title>
        <authorList>
            <person name="Li J."/>
            <person name="Vrielink A."/>
            <person name="Brick P."/>
            <person name="Blow D.M."/>
        </authorList>
    </citation>
    <scope>X-RAY CRYSTALLOGRAPHY (1.80 ANGSTROMS) OF 46-552 IN COMPLEX WITH FAD AND DEHYDROISOANDROSTERONE</scope>
    <scope>COFACTOR</scope>
    <scope>ACTIVE SITE</scope>
</reference>
<keyword id="KW-0002">3D-structure</keyword>
<keyword id="KW-0153">Cholesterol metabolism</keyword>
<keyword id="KW-0903">Direct protein sequencing</keyword>
<keyword id="KW-0274">FAD</keyword>
<keyword id="KW-0285">Flavoprotein</keyword>
<keyword id="KW-0413">Isomerase</keyword>
<keyword id="KW-0443">Lipid metabolism</keyword>
<keyword id="KW-0560">Oxidoreductase</keyword>
<keyword id="KW-0964">Secreted</keyword>
<keyword id="KW-0732">Signal</keyword>
<keyword id="KW-0753">Steroid metabolism</keyword>
<keyword id="KW-1207">Sterol metabolism</keyword>
<gene>
    <name evidence="5" type="primary">choB</name>
</gene>
<protein>
    <recommendedName>
        <fullName evidence="7">Cholesterol oxidase</fullName>
        <shortName evidence="7">CHOD</shortName>
        <ecNumber evidence="11">1.1.3.6</ecNumber>
    </recommendedName>
    <alternativeName>
        <fullName evidence="6">3beta-hydroxysteroid oxidase</fullName>
    </alternativeName>
    <alternativeName>
        <fullName>Cholesterol isomerase</fullName>
        <ecNumber evidence="11">5.3.3.1</ecNumber>
    </alternativeName>
</protein>
<name>CHOD_BREST</name>
<feature type="signal peptide" description="Tat-type signal" evidence="1 2">
    <location>
        <begin position="1"/>
        <end position="45"/>
    </location>
</feature>
<feature type="chain" id="PRO_0000012332" description="Cholesterol oxidase">
    <location>
        <begin position="46"/>
        <end position="552"/>
    </location>
</feature>
<feature type="active site" description="Proton acceptor" evidence="10">
    <location>
        <position position="406"/>
    </location>
</feature>
<feature type="active site" description="Proton acceptor" evidence="10">
    <location>
        <position position="492"/>
    </location>
</feature>
<feature type="binding site" evidence="4 12 13">
    <location>
        <position position="66"/>
    </location>
    <ligand>
        <name>FAD</name>
        <dbReference type="ChEBI" id="CHEBI:57692"/>
    </ligand>
</feature>
<feature type="binding site" evidence="4 12 13">
    <location>
        <position position="67"/>
    </location>
    <ligand>
        <name>FAD</name>
        <dbReference type="ChEBI" id="CHEBI:57692"/>
    </ligand>
</feature>
<feature type="binding site" evidence="4 12 13">
    <location>
        <position position="86"/>
    </location>
    <ligand>
        <name>FAD</name>
        <dbReference type="ChEBI" id="CHEBI:57692"/>
    </ligand>
</feature>
<feature type="binding site" evidence="4 12 13">
    <location>
        <position position="160"/>
    </location>
    <ligand>
        <name>FAD</name>
        <dbReference type="ChEBI" id="CHEBI:57692"/>
    </ligand>
</feature>
<feature type="binding site" evidence="4 12 13">
    <location>
        <position position="164"/>
    </location>
    <ligand>
        <name>FAD</name>
        <dbReference type="ChEBI" id="CHEBI:57692"/>
    </ligand>
</feature>
<feature type="binding site" evidence="4 12 13">
    <location>
        <position position="165"/>
    </location>
    <ligand>
        <name>FAD</name>
        <dbReference type="ChEBI" id="CHEBI:57692"/>
    </ligand>
</feature>
<feature type="binding site" evidence="4 12 13">
    <location>
        <position position="167"/>
    </location>
    <ligand>
        <name>FAD</name>
        <dbReference type="ChEBI" id="CHEBI:57692"/>
    </ligand>
</feature>
<feature type="binding site" evidence="4 12 13">
    <location>
        <position position="295"/>
    </location>
    <ligand>
        <name>FAD</name>
        <dbReference type="ChEBI" id="CHEBI:57692"/>
    </ligand>
</feature>
<feature type="binding site" evidence="4 12 13">
    <location>
        <position position="520"/>
    </location>
    <ligand>
        <name>FAD</name>
        <dbReference type="ChEBI" id="CHEBI:57692"/>
    </ligand>
</feature>
<feature type="binding site" evidence="4 12 13">
    <location>
        <position position="532"/>
    </location>
    <ligand>
        <name>FAD</name>
        <dbReference type="ChEBI" id="CHEBI:57692"/>
    </ligand>
</feature>
<feature type="strand" evidence="14">
    <location>
        <begin position="56"/>
        <end position="62"/>
    </location>
</feature>
<feature type="helix" evidence="14">
    <location>
        <begin position="66"/>
        <end position="77"/>
    </location>
</feature>
<feature type="strand" evidence="14">
    <location>
        <begin position="82"/>
        <end position="85"/>
    </location>
</feature>
<feature type="strand" evidence="14">
    <location>
        <begin position="104"/>
        <end position="106"/>
    </location>
</feature>
<feature type="strand" evidence="14">
    <location>
        <begin position="111"/>
        <end position="114"/>
    </location>
</feature>
<feature type="strand" evidence="14">
    <location>
        <begin position="140"/>
        <end position="145"/>
    </location>
</feature>
<feature type="strand" evidence="14">
    <location>
        <begin position="150"/>
        <end position="154"/>
    </location>
</feature>
<feature type="helix" evidence="14">
    <location>
        <begin position="159"/>
        <end position="162"/>
    </location>
</feature>
<feature type="helix" evidence="14">
    <location>
        <begin position="173"/>
        <end position="179"/>
    </location>
</feature>
<feature type="helix" evidence="14">
    <location>
        <begin position="185"/>
        <end position="190"/>
    </location>
</feature>
<feature type="helix" evidence="14">
    <location>
        <begin position="192"/>
        <end position="200"/>
    </location>
</feature>
<feature type="helix" evidence="14">
    <location>
        <begin position="207"/>
        <end position="212"/>
    </location>
</feature>
<feature type="helix" evidence="14">
    <location>
        <begin position="214"/>
        <end position="216"/>
    </location>
</feature>
<feature type="helix" evidence="14">
    <location>
        <begin position="217"/>
        <end position="228"/>
    </location>
</feature>
<feature type="strand" evidence="14">
    <location>
        <begin position="233"/>
        <end position="235"/>
    </location>
</feature>
<feature type="strand" evidence="14">
    <location>
        <begin position="238"/>
        <end position="240"/>
    </location>
</feature>
<feature type="helix" evidence="14">
    <location>
        <begin position="242"/>
        <end position="249"/>
    </location>
</feature>
<feature type="turn" evidence="14">
    <location>
        <begin position="257"/>
        <end position="260"/>
    </location>
</feature>
<feature type="strand" evidence="14">
    <location>
        <begin position="267"/>
        <end position="270"/>
    </location>
</feature>
<feature type="turn" evidence="14">
    <location>
        <begin position="273"/>
        <end position="276"/>
    </location>
</feature>
<feature type="helix" evidence="14">
    <location>
        <begin position="277"/>
        <end position="283"/>
    </location>
</feature>
<feature type="strand" evidence="14">
    <location>
        <begin position="287"/>
        <end position="290"/>
    </location>
</feature>
<feature type="strand" evidence="14">
    <location>
        <begin position="292"/>
        <end position="300"/>
    </location>
</feature>
<feature type="strand" evidence="14">
    <location>
        <begin position="302"/>
        <end position="313"/>
    </location>
</feature>
<feature type="strand" evidence="14">
    <location>
        <begin position="319"/>
        <end position="332"/>
    </location>
</feature>
<feature type="helix" evidence="14">
    <location>
        <begin position="335"/>
        <end position="348"/>
    </location>
</feature>
<feature type="turn" evidence="14">
    <location>
        <begin position="357"/>
        <end position="360"/>
    </location>
</feature>
<feature type="strand" evidence="14">
    <location>
        <begin position="368"/>
        <end position="374"/>
    </location>
</feature>
<feature type="strand" evidence="14">
    <location>
        <begin position="391"/>
        <end position="394"/>
    </location>
</feature>
<feature type="strand" evidence="14">
    <location>
        <begin position="403"/>
        <end position="408"/>
    </location>
</feature>
<feature type="strand" evidence="14">
    <location>
        <begin position="418"/>
        <end position="425"/>
    </location>
</feature>
<feature type="strand" evidence="14">
    <location>
        <begin position="433"/>
        <end position="436"/>
    </location>
</feature>
<feature type="turn" evidence="14">
    <location>
        <begin position="437"/>
        <end position="440"/>
    </location>
</feature>
<feature type="strand" evidence="14">
    <location>
        <begin position="441"/>
        <end position="444"/>
    </location>
</feature>
<feature type="helix" evidence="14">
    <location>
        <begin position="448"/>
        <end position="451"/>
    </location>
</feature>
<feature type="helix" evidence="14">
    <location>
        <begin position="452"/>
        <end position="469"/>
    </location>
</feature>
<feature type="strand" evidence="14">
    <location>
        <begin position="484"/>
        <end position="486"/>
    </location>
</feature>
<feature type="strand" evidence="14">
    <location>
        <begin position="488"/>
        <end position="491"/>
    </location>
</feature>
<feature type="turn" evidence="14">
    <location>
        <begin position="499"/>
        <end position="501"/>
    </location>
</feature>
<feature type="strand" evidence="14">
    <location>
        <begin position="515"/>
        <end position="517"/>
    </location>
</feature>
<feature type="helix" evidence="14">
    <location>
        <begin position="520"/>
        <end position="522"/>
    </location>
</feature>
<feature type="helix" evidence="14">
    <location>
        <begin position="532"/>
        <end position="549"/>
    </location>
</feature>
<evidence type="ECO:0000255" key="1">
    <source>
        <dbReference type="PROSITE-ProRule" id="PRU00648"/>
    </source>
</evidence>
<evidence type="ECO:0000269" key="2">
    <source>
    </source>
</evidence>
<evidence type="ECO:0000269" key="3">
    <source>
    </source>
</evidence>
<evidence type="ECO:0000269" key="4">
    <source>
    </source>
</evidence>
<evidence type="ECO:0000303" key="5">
    <source>
    </source>
</evidence>
<evidence type="ECO:0000303" key="6">
    <source>
    </source>
</evidence>
<evidence type="ECO:0000303" key="7">
    <source>
    </source>
</evidence>
<evidence type="ECO:0000305" key="8"/>
<evidence type="ECO:0000305" key="9">
    <source>
    </source>
</evidence>
<evidence type="ECO:0000305" key="10">
    <source>
    </source>
</evidence>
<evidence type="ECO:0000305" key="11">
    <source>
    </source>
</evidence>
<evidence type="ECO:0007744" key="12">
    <source>
        <dbReference type="PDB" id="1COY"/>
    </source>
</evidence>
<evidence type="ECO:0007744" key="13">
    <source>
        <dbReference type="PDB" id="3COX"/>
    </source>
</evidence>
<evidence type="ECO:0007829" key="14">
    <source>
        <dbReference type="PDB" id="1COY"/>
    </source>
</evidence>
<sequence length="552" mass="59358">MTDSRANRADATRGVASVSRRRFLAGAGLTAGAIALSSMSTSASAAPSRTLADGDRVPALVIGSGYGGAVAALRLTQAGIPTQIVEMGRSWDTPGSDGKIFCGMLNPDKRSMWLADKTDQPVSNFMGFGINKSIDRYVGVLDSERFSGIKVYQGRGVGGGSLVNGGMAVTPKRNYFEEILPSVDSNEMYNKYFPRANTGLGVNNIDQAWFESTEWYKFARTGRKTAQRSGFTTAFVPNVYDFEYMKKEAAGQVTKSGLGGEVIYGNNAGKKSLDKTYLAQAAATGKLTITTLHRVTKVAPATGSGYSVTMEQIDEQGNVVATKVVTADRVFFAAGSVGTSKLLVSMKAQGHLPNLSSQVGEGWGNNGNIMVGRANHMWDATGSKQATIPTMGIDNWADPTAPIFAEIAPLPAGLETYVSLYLAITKNPERARFQFNSGTGKVDLTWAQSQNQKGIDMAKKVFDKINQKEGTIYRTDLFGVYFKTWGDDFTYHPLGGVLLNKATDNFGRLPEYPGLYVVDGSLVPGNVGVNPFVTITRLAERNMDKIISSDIQ</sequence>
<comment type="function">
    <text evidence="11">Bifunctional enzyme that catalyzes the oxidation and isomerization of cholesterol to cholestenone (cholest-4-en-3-one), an initial step in the cholesterol degradation process.</text>
</comment>
<comment type="catalytic activity">
    <reaction evidence="11">
        <text>cholesterol + O2 = cholest-5-en-3-one + H2O2</text>
        <dbReference type="Rhea" id="RHEA:32183"/>
        <dbReference type="ChEBI" id="CHEBI:15379"/>
        <dbReference type="ChEBI" id="CHEBI:16113"/>
        <dbReference type="ChEBI" id="CHEBI:16240"/>
        <dbReference type="ChEBI" id="CHEBI:63906"/>
        <dbReference type="EC" id="1.1.3.6"/>
    </reaction>
    <physiologicalReaction direction="left-to-right" evidence="8">
        <dbReference type="Rhea" id="RHEA:32184"/>
    </physiologicalReaction>
</comment>
<comment type="catalytic activity">
    <reaction evidence="11">
        <text>cholest-5-en-3-one = cholest-4-en-3-one</text>
        <dbReference type="Rhea" id="RHEA:32187"/>
        <dbReference type="ChEBI" id="CHEBI:16175"/>
        <dbReference type="ChEBI" id="CHEBI:63906"/>
        <dbReference type="EC" id="5.3.3.1"/>
    </reaction>
    <physiologicalReaction direction="left-to-right" evidence="8">
        <dbReference type="Rhea" id="RHEA:32188"/>
    </physiologicalReaction>
</comment>
<comment type="cofactor">
    <cofactor evidence="3 4">
        <name>FAD</name>
        <dbReference type="ChEBI" id="CHEBI:57692"/>
    </cofactor>
</comment>
<comment type="pathway">
    <text evidence="9">Steroid metabolism; cholesterol degradation.</text>
</comment>
<comment type="subcellular location">
    <subcellularLocation>
        <location evidence="2">Secreted</location>
    </subcellularLocation>
</comment>
<comment type="domain">
    <text evidence="3">Contains a FAD-binding domain, which consists of three non-continuous segments of sequence (including both the N terminus and the C terminus) and a steroid-binding domain, which consists of two non-continuous segments of sequence.</text>
</comment>
<comment type="PTM">
    <text evidence="1 2">Predicted to be exported by the Tat system. The position of the signal peptide cleavage has been experimentally proven.</text>
</comment>
<comment type="similarity">
    <text evidence="8">Belongs to the GMC oxidoreductase family.</text>
</comment>
<organism>
    <name type="scientific">Brevibacterium sterolicum</name>
    <dbReference type="NCBI Taxonomy" id="1702"/>
    <lineage>
        <taxon>Bacteria</taxon>
        <taxon>Bacillati</taxon>
        <taxon>Actinomycetota</taxon>
        <taxon>Actinomycetes</taxon>
        <taxon>Micrococcales</taxon>
        <taxon>Brevibacteriaceae</taxon>
        <taxon>Brevibacterium</taxon>
    </lineage>
</organism>